<gene>
    <name evidence="1" type="primary">gcvT</name>
    <name type="ordered locus">SYNPCC7002_A1703</name>
</gene>
<sequence length="363" mass="39644">MTLQRTPLHDLAIAAGAKFVPFSGWEMAVQYKGLKVEHQAVRTEVGMFDISHMGKFQLAGENLIAAMQKLVPSNLARLAPGQAQYTVLLNDHGGIIDDVIYYHQGDRQGFLIVNAATTQKDWDWLTHHLTAQGITLTDVSQENILLAIQGPQAEKALQPVVENLDLATLKLFNHGQGQIFGETAFIARTGYTGEDGFEVMVAPTAGKKLWSALIDAGVMPCGLGARDTLRLEAGLHLYGQDMDDDTTPLEAGLGWLIHWQEKDAFIAKDILQTQKAAGVQRRLVGLEMQGRGIARHDYSVLVNGEAVGLVTSGTMSPTLEKAIALAYLPLEFSKVGQAVTVEIRGKQYPAQVVKKPFYRASKK</sequence>
<evidence type="ECO:0000255" key="1">
    <source>
        <dbReference type="HAMAP-Rule" id="MF_00259"/>
    </source>
</evidence>
<protein>
    <recommendedName>
        <fullName evidence="1">Aminomethyltransferase</fullName>
        <ecNumber evidence="1">2.1.2.10</ecNumber>
    </recommendedName>
    <alternativeName>
        <fullName evidence="1">Glycine cleavage system T protein</fullName>
    </alternativeName>
</protein>
<name>GCST_PICP2</name>
<proteinExistence type="inferred from homology"/>
<dbReference type="EC" id="2.1.2.10" evidence="1"/>
<dbReference type="EMBL" id="CP000951">
    <property type="protein sequence ID" value="ACA99692.1"/>
    <property type="molecule type" value="Genomic_DNA"/>
</dbReference>
<dbReference type="RefSeq" id="WP_012307315.1">
    <property type="nucleotide sequence ID" value="NZ_JAHHPU010000002.1"/>
</dbReference>
<dbReference type="SMR" id="B1XP99"/>
<dbReference type="STRING" id="32049.SYNPCC7002_A1703"/>
<dbReference type="KEGG" id="syp:SYNPCC7002_A1703"/>
<dbReference type="eggNOG" id="COG0404">
    <property type="taxonomic scope" value="Bacteria"/>
</dbReference>
<dbReference type="HOGENOM" id="CLU_007884_10_2_3"/>
<dbReference type="Proteomes" id="UP000001688">
    <property type="component" value="Chromosome"/>
</dbReference>
<dbReference type="GO" id="GO:0005829">
    <property type="term" value="C:cytosol"/>
    <property type="evidence" value="ECO:0007669"/>
    <property type="project" value="TreeGrafter"/>
</dbReference>
<dbReference type="GO" id="GO:0005960">
    <property type="term" value="C:glycine cleavage complex"/>
    <property type="evidence" value="ECO:0007669"/>
    <property type="project" value="InterPro"/>
</dbReference>
<dbReference type="GO" id="GO:0004047">
    <property type="term" value="F:aminomethyltransferase activity"/>
    <property type="evidence" value="ECO:0007669"/>
    <property type="project" value="UniProtKB-UniRule"/>
</dbReference>
<dbReference type="GO" id="GO:0008483">
    <property type="term" value="F:transaminase activity"/>
    <property type="evidence" value="ECO:0007669"/>
    <property type="project" value="UniProtKB-KW"/>
</dbReference>
<dbReference type="GO" id="GO:0019464">
    <property type="term" value="P:glycine decarboxylation via glycine cleavage system"/>
    <property type="evidence" value="ECO:0007669"/>
    <property type="project" value="UniProtKB-UniRule"/>
</dbReference>
<dbReference type="FunFam" id="2.40.30.110:FF:000003">
    <property type="entry name" value="Aminomethyltransferase"/>
    <property type="match status" value="1"/>
</dbReference>
<dbReference type="FunFam" id="3.30.70.1400:FF:000001">
    <property type="entry name" value="Aminomethyltransferase"/>
    <property type="match status" value="1"/>
</dbReference>
<dbReference type="FunFam" id="4.10.1250.10:FF:000001">
    <property type="entry name" value="Aminomethyltransferase"/>
    <property type="match status" value="1"/>
</dbReference>
<dbReference type="Gene3D" id="2.40.30.110">
    <property type="entry name" value="Aminomethyltransferase beta-barrel domains"/>
    <property type="match status" value="1"/>
</dbReference>
<dbReference type="Gene3D" id="3.30.70.1400">
    <property type="entry name" value="Aminomethyltransferase beta-barrel domains"/>
    <property type="match status" value="1"/>
</dbReference>
<dbReference type="Gene3D" id="4.10.1250.10">
    <property type="entry name" value="Aminomethyltransferase fragment"/>
    <property type="match status" value="1"/>
</dbReference>
<dbReference type="Gene3D" id="3.30.1360.120">
    <property type="entry name" value="Probable tRNA modification gtpase trme, domain 1"/>
    <property type="match status" value="1"/>
</dbReference>
<dbReference type="HAMAP" id="MF_00259">
    <property type="entry name" value="GcvT"/>
    <property type="match status" value="1"/>
</dbReference>
<dbReference type="InterPro" id="IPR006223">
    <property type="entry name" value="GCS_T"/>
</dbReference>
<dbReference type="InterPro" id="IPR022903">
    <property type="entry name" value="GCS_T_bac"/>
</dbReference>
<dbReference type="InterPro" id="IPR013977">
    <property type="entry name" value="GCST_C"/>
</dbReference>
<dbReference type="InterPro" id="IPR006222">
    <property type="entry name" value="GCV_T_N"/>
</dbReference>
<dbReference type="InterPro" id="IPR028896">
    <property type="entry name" value="GcvT/YgfZ/DmdA"/>
</dbReference>
<dbReference type="InterPro" id="IPR029043">
    <property type="entry name" value="GcvT/YgfZ_C"/>
</dbReference>
<dbReference type="InterPro" id="IPR027266">
    <property type="entry name" value="TrmE/GcvT_dom1"/>
</dbReference>
<dbReference type="NCBIfam" id="TIGR00528">
    <property type="entry name" value="gcvT"/>
    <property type="match status" value="1"/>
</dbReference>
<dbReference type="NCBIfam" id="NF001567">
    <property type="entry name" value="PRK00389.1"/>
    <property type="match status" value="1"/>
</dbReference>
<dbReference type="PANTHER" id="PTHR43757">
    <property type="entry name" value="AMINOMETHYLTRANSFERASE"/>
    <property type="match status" value="1"/>
</dbReference>
<dbReference type="PANTHER" id="PTHR43757:SF2">
    <property type="entry name" value="AMINOMETHYLTRANSFERASE, MITOCHONDRIAL"/>
    <property type="match status" value="1"/>
</dbReference>
<dbReference type="Pfam" id="PF01571">
    <property type="entry name" value="GCV_T"/>
    <property type="match status" value="1"/>
</dbReference>
<dbReference type="Pfam" id="PF08669">
    <property type="entry name" value="GCV_T_C"/>
    <property type="match status" value="1"/>
</dbReference>
<dbReference type="PIRSF" id="PIRSF006487">
    <property type="entry name" value="GcvT"/>
    <property type="match status" value="1"/>
</dbReference>
<dbReference type="SUPFAM" id="SSF101790">
    <property type="entry name" value="Aminomethyltransferase beta-barrel domain"/>
    <property type="match status" value="1"/>
</dbReference>
<dbReference type="SUPFAM" id="SSF103025">
    <property type="entry name" value="Folate-binding domain"/>
    <property type="match status" value="1"/>
</dbReference>
<keyword id="KW-0032">Aminotransferase</keyword>
<keyword id="KW-1185">Reference proteome</keyword>
<keyword id="KW-0808">Transferase</keyword>
<feature type="chain" id="PRO_1000125647" description="Aminomethyltransferase">
    <location>
        <begin position="1"/>
        <end position="363"/>
    </location>
</feature>
<organism>
    <name type="scientific">Picosynechococcus sp. (strain ATCC 27264 / PCC 7002 / PR-6)</name>
    <name type="common">Agmenellum quadruplicatum</name>
    <dbReference type="NCBI Taxonomy" id="32049"/>
    <lineage>
        <taxon>Bacteria</taxon>
        <taxon>Bacillati</taxon>
        <taxon>Cyanobacteriota</taxon>
        <taxon>Cyanophyceae</taxon>
        <taxon>Oscillatoriophycideae</taxon>
        <taxon>Chroococcales</taxon>
        <taxon>Geminocystaceae</taxon>
        <taxon>Picosynechococcus</taxon>
    </lineage>
</organism>
<accession>B1XP99</accession>
<comment type="function">
    <text evidence="1">The glycine cleavage system catalyzes the degradation of glycine.</text>
</comment>
<comment type="catalytic activity">
    <reaction evidence="1">
        <text>N(6)-[(R)-S(8)-aminomethyldihydrolipoyl]-L-lysyl-[protein] + (6S)-5,6,7,8-tetrahydrofolate = N(6)-[(R)-dihydrolipoyl]-L-lysyl-[protein] + (6R)-5,10-methylene-5,6,7,8-tetrahydrofolate + NH4(+)</text>
        <dbReference type="Rhea" id="RHEA:16945"/>
        <dbReference type="Rhea" id="RHEA-COMP:10475"/>
        <dbReference type="Rhea" id="RHEA-COMP:10492"/>
        <dbReference type="ChEBI" id="CHEBI:15636"/>
        <dbReference type="ChEBI" id="CHEBI:28938"/>
        <dbReference type="ChEBI" id="CHEBI:57453"/>
        <dbReference type="ChEBI" id="CHEBI:83100"/>
        <dbReference type="ChEBI" id="CHEBI:83143"/>
        <dbReference type="EC" id="2.1.2.10"/>
    </reaction>
</comment>
<comment type="subunit">
    <text evidence="1">The glycine cleavage system is composed of four proteins: P, T, L and H.</text>
</comment>
<comment type="similarity">
    <text evidence="1">Belongs to the GcvT family.</text>
</comment>
<reference key="1">
    <citation type="submission" date="2008-02" db="EMBL/GenBank/DDBJ databases">
        <title>Complete sequence of Synechococcus sp. PCC 7002.</title>
        <authorList>
            <person name="Li T."/>
            <person name="Zhao J."/>
            <person name="Zhao C."/>
            <person name="Liu Z."/>
            <person name="Zhao F."/>
            <person name="Marquardt J."/>
            <person name="Nomura C.T."/>
            <person name="Persson S."/>
            <person name="Detter J.C."/>
            <person name="Richardson P.M."/>
            <person name="Lanz C."/>
            <person name="Schuster S.C."/>
            <person name="Wang J."/>
            <person name="Li S."/>
            <person name="Huang X."/>
            <person name="Cai T."/>
            <person name="Yu Z."/>
            <person name="Luo J."/>
            <person name="Zhao J."/>
            <person name="Bryant D.A."/>
        </authorList>
    </citation>
    <scope>NUCLEOTIDE SEQUENCE [LARGE SCALE GENOMIC DNA]</scope>
    <source>
        <strain>ATCC 27264 / PCC 7002 / PR-6</strain>
    </source>
</reference>